<name>TEG7_HCMVA</name>
<evidence type="ECO:0000250" key="1">
    <source>
        <dbReference type="UniProtKB" id="P10235"/>
    </source>
</evidence>
<evidence type="ECO:0000256" key="2">
    <source>
        <dbReference type="SAM" id="MobiDB-lite"/>
    </source>
</evidence>
<evidence type="ECO:0000269" key="3">
    <source>
    </source>
</evidence>
<evidence type="ECO:0000269" key="4">
    <source>
    </source>
</evidence>
<evidence type="ECO:0000305" key="5"/>
<organismHost>
    <name type="scientific">Homo sapiens</name>
    <name type="common">Human</name>
    <dbReference type="NCBI Taxonomy" id="9606"/>
</organismHost>
<accession>P16823</accession>
<accession>Q7M6M1</accession>
<proteinExistence type="evidence at protein level"/>
<reference key="1">
    <citation type="journal article" date="1990" name="Curr. Top. Microbiol. Immunol.">
        <title>Analysis of the protein-coding content of the sequence of human cytomegalovirus strain AD169.</title>
        <authorList>
            <person name="Chee M.S."/>
            <person name="Bankier A.T."/>
            <person name="Beck S."/>
            <person name="Bohni R."/>
            <person name="Brown C.M."/>
            <person name="Cerny R."/>
            <person name="Horsnell T."/>
            <person name="Hutchison C.A. III"/>
            <person name="Kouzarides T."/>
            <person name="Martignetti J.A."/>
            <person name="Preddie E."/>
            <person name="Satchwell S.C."/>
            <person name="Tomlinson P."/>
            <person name="Weston K.M."/>
            <person name="Barrell B.G."/>
        </authorList>
    </citation>
    <scope>NUCLEOTIDE SEQUENCE [LARGE SCALE GENOMIC DNA]</scope>
</reference>
<reference key="2">
    <citation type="journal article" date="2003" name="J. Gen. Virol.">
        <title>The human cytomegalovirus genome revisited: comparison with the chimpanzee cytomegalovirus genome.</title>
        <authorList>
            <person name="Davison A.J."/>
            <person name="Dolan A."/>
            <person name="Akter P."/>
            <person name="Addison C."/>
            <person name="Dargan D.J."/>
            <person name="Alcendor D.J."/>
            <person name="McGeoch D.J."/>
            <person name="Hayward G.S."/>
        </authorList>
    </citation>
    <scope>GENOME REANNOTATION</scope>
</reference>
<reference key="3">
    <citation type="journal article" date="2003" name="J. Gen. Virol.">
        <authorList>
            <person name="Davison A.J."/>
            <person name="Dolan A."/>
            <person name="Akter P."/>
            <person name="Addison C."/>
            <person name="Dargan D.J."/>
            <person name="Alcendor D.J."/>
            <person name="McGeoch D.J."/>
            <person name="Hayward G.S."/>
        </authorList>
    </citation>
    <scope>ERRATUM OF PUBMED:12533697</scope>
</reference>
<reference key="4">
    <citation type="journal article" date="2004" name="J. Virol.">
        <title>Identification of proteins in human cytomegalovirus (HCMV) particles: the HCMV proteome.</title>
        <authorList>
            <person name="Varnum S.M."/>
            <person name="Streblow D.N."/>
            <person name="Monroe M.E."/>
            <person name="Smith P."/>
            <person name="Auberry K.J."/>
            <person name="Pasa-Tolic L."/>
            <person name="Wang D."/>
            <person name="Camp D.G. II"/>
            <person name="Rodland K."/>
            <person name="Wiley S."/>
            <person name="Britt W."/>
            <person name="Shenk T."/>
            <person name="Smith R.D."/>
            <person name="Nelson J.A."/>
        </authorList>
    </citation>
    <scope>IDENTIFICATION</scope>
</reference>
<reference key="5">
    <citation type="journal article" date="2004" name="J. Virol.">
        <authorList>
            <person name="Varnum S.M."/>
            <person name="Streblow D.N."/>
            <person name="Monroe M.E."/>
            <person name="Smith P."/>
            <person name="Auberry K.J."/>
            <person name="Pasa-Tolic L."/>
            <person name="Wang D."/>
            <person name="Camp D.G. II"/>
            <person name="Rodland K."/>
            <person name="Wiley S."/>
            <person name="Britt W."/>
            <person name="Shenk T."/>
            <person name="Smith R.D."/>
            <person name="Nelson J.A."/>
        </authorList>
    </citation>
    <scope>ERRATUM OF PUBMED:15452216</scope>
</reference>
<reference key="6">
    <citation type="journal article" date="2011" name="J. Virol.">
        <title>The tegument protein UL71 of human cytomegalovirus is involved in late envelopment and affects multivesicular bodies.</title>
        <authorList>
            <person name="Schauflinger M."/>
            <person name="Fischer D."/>
            <person name="Schreiber A."/>
            <person name="Chevillotte M."/>
            <person name="Walther P."/>
            <person name="Mertens T."/>
            <person name="von Einem J."/>
        </authorList>
    </citation>
    <scope>FUNCTION</scope>
</reference>
<reference key="7">
    <citation type="journal article" date="2012" name="J. Virol.">
        <title>A leucine zipper motif of a tegument protein triggers final envelopment of human cytomegalovirus.</title>
        <authorList>
            <person name="Meissner C.S."/>
            <person name="Suffner S."/>
            <person name="Schauflinger M."/>
            <person name="von Einem J."/>
            <person name="Bogner E."/>
        </authorList>
    </citation>
    <scope>OLIGOMERIZATION</scope>
    <scope>MUTAGENESIS OF LEU-34 AND LEU-41</scope>
    <scope>SUBCELLULAR LOCATION</scope>
</reference>
<dbReference type="EMBL" id="X17403">
    <property type="protein sequence ID" value="CAA35385.1"/>
    <property type="status" value="ALT_INIT"/>
    <property type="molecule type" value="Genomic_DNA"/>
</dbReference>
<dbReference type="EMBL" id="BK000394">
    <property type="protein sequence ID" value="DAA00167.1"/>
    <property type="molecule type" value="Genomic_DNA"/>
</dbReference>
<dbReference type="PIR" id="S09833">
    <property type="entry name" value="S09833"/>
</dbReference>
<dbReference type="Proteomes" id="UP000008991">
    <property type="component" value="Segment"/>
</dbReference>
<dbReference type="Proteomes" id="UP000008992">
    <property type="component" value="Segment"/>
</dbReference>
<dbReference type="GO" id="GO:0044177">
    <property type="term" value="C:host cell Golgi apparatus"/>
    <property type="evidence" value="ECO:0007669"/>
    <property type="project" value="UniProtKB-SubCell"/>
</dbReference>
<dbReference type="GO" id="GO:0019033">
    <property type="term" value="C:viral tegument"/>
    <property type="evidence" value="ECO:0007669"/>
    <property type="project" value="UniProtKB-SubCell"/>
</dbReference>
<dbReference type="InterPro" id="IPR007619">
    <property type="entry name" value="Herpes_U44"/>
</dbReference>
<dbReference type="Pfam" id="PF04533">
    <property type="entry name" value="Herpes_U44"/>
    <property type="match status" value="1"/>
</dbReference>
<gene>
    <name type="primary">UL71</name>
</gene>
<protein>
    <recommendedName>
        <fullName>Tegument protein UL51 homolog</fullName>
    </recommendedName>
</protein>
<keyword id="KW-1035">Host cytoplasm</keyword>
<keyword id="KW-1040">Host Golgi apparatus</keyword>
<keyword id="KW-0449">Lipoprotein</keyword>
<keyword id="KW-0564">Palmitate</keyword>
<keyword id="KW-0597">Phosphoprotein</keyword>
<keyword id="KW-1185">Reference proteome</keyword>
<keyword id="KW-0946">Virion</keyword>
<keyword id="KW-0920">Virion tegument</keyword>
<feature type="chain" id="PRO_0000116214" description="Tegument protein UL51 homolog">
    <location>
        <begin position="1"/>
        <end position="361"/>
    </location>
</feature>
<feature type="region of interest" description="Disordered" evidence="2">
    <location>
        <begin position="251"/>
        <end position="299"/>
    </location>
</feature>
<feature type="compositionally biased region" description="Low complexity" evidence="2">
    <location>
        <begin position="266"/>
        <end position="281"/>
    </location>
</feature>
<feature type="lipid moiety-binding region" description="S-palmitoyl cysteine; by host" evidence="1">
    <location>
        <position position="8"/>
    </location>
</feature>
<feature type="mutagenesis site" description="Complete loss of oligomerization." evidence="4">
    <original>L</original>
    <variation>A</variation>
    <location>
        <position position="34"/>
    </location>
</feature>
<feature type="mutagenesis site" description="Complete loss of oligomerization." evidence="4">
    <original>L</original>
    <variation>A</variation>
    <location>
        <position position="41"/>
    </location>
</feature>
<comment type="function">
    <text evidence="1 3">Plays several roles during the time course of infection, including egress of virus particles from the perinuclear space and secondary envelopment of cytoplasmic capsids that bud into specific trans-Golgi network (TGN)-derived membranes.</text>
</comment>
<comment type="subunit">
    <text evidence="1 4">Oligomerizes. Interacts with UL103; this interaction mediates UL103 incorporation to virions.</text>
</comment>
<comment type="subcellular location">
    <subcellularLocation>
        <location evidence="1">Virion tegument</location>
    </subcellularLocation>
    <subcellularLocation>
        <location evidence="1">Host cytoplasm</location>
    </subcellularLocation>
    <subcellularLocation>
        <location evidence="1">Host Golgi apparatus</location>
    </subcellularLocation>
</comment>
<comment type="PTM">
    <text evidence="1">Phosphorylated.</text>
</comment>
<comment type="PTM">
    <text evidence="1">Palmitoylation is necessary for Golgi localization.</text>
</comment>
<comment type="similarity">
    <text evidence="5">Belongs to the herpesviridae UL51 family.</text>
</comment>
<comment type="sequence caution" evidence="5">
    <conflict type="erroneous initiation">
        <sequence resource="EMBL-CDS" id="CAA35385"/>
    </conflict>
</comment>
<organism>
    <name type="scientific">Human cytomegalovirus (strain AD169)</name>
    <name type="common">HHV-5</name>
    <name type="synonym">Human herpesvirus 5</name>
    <dbReference type="NCBI Taxonomy" id="10360"/>
    <lineage>
        <taxon>Viruses</taxon>
        <taxon>Duplodnaviria</taxon>
        <taxon>Heunggongvirae</taxon>
        <taxon>Peploviricota</taxon>
        <taxon>Herviviricetes</taxon>
        <taxon>Herpesvirales</taxon>
        <taxon>Orthoherpesviridae</taxon>
        <taxon>Betaherpesvirinae</taxon>
        <taxon>Cytomegalovirus</taxon>
        <taxon>Cytomegalovirus humanbeta5</taxon>
        <taxon>Human cytomegalovirus</taxon>
    </lineage>
</organism>
<sequence>MQLAQRLCELLMCRRKAAPVADYVLLQPSEDVELRELQAFLDENFKQLEITPADLRTFSRDTDVVNHLLKLLPLYRQCQSKCAFLKGYLSEGCLPHTRPAAEVECKKSQRILEALDILILKLVVGEFAMSEADSLEMLLDKFSTDQASLVEVQRVMGLVDMDCEKSAYMLEAGAAATVAPLTPPAVVQGESGVREDGETVAAVSAFACPSVSDSLIPEETGVTRPMMSLAHINTVSCPTVMRFDQRLLEEGDEEDEVTVMSPSPEPVQQQPPVEPVQQQPQGRGSHRRRYKESAPQETLPTNHEREILDLMRHSPDVPREAVMSPTMVTIPPPQIPFVGSARELRGVKKKKPTAAALLSSA</sequence>